<protein>
    <recommendedName>
        <fullName evidence="1">Cytochrome b6-f complex subunit 6</fullName>
    </recommendedName>
    <alternativeName>
        <fullName evidence="1">Cytochrome b6-f complex subunit PetL</fullName>
    </alternativeName>
    <alternativeName>
        <fullName evidence="1">Cytochrome b6-f complex subunit VI</fullName>
    </alternativeName>
</protein>
<name>PETL_ATRBE</name>
<feature type="chain" id="PRO_0000220438" description="Cytochrome b6-f complex subunit 6">
    <location>
        <begin position="1"/>
        <end position="31"/>
    </location>
</feature>
<feature type="transmembrane region" description="Helical" evidence="1">
    <location>
        <begin position="4"/>
        <end position="24"/>
    </location>
</feature>
<sequence length="31" mass="3389">MLTITSYFGFLLAALTITSALFIGLSKIRLI</sequence>
<comment type="function">
    <text evidence="1">Component of the cytochrome b6-f complex, which mediates electron transfer between photosystem II (PSII) and photosystem I (PSI), cyclic electron flow around PSI, and state transitions. PetL is important for photoautotrophic growth as well as for electron transfer efficiency and stability of the cytochrome b6-f complex.</text>
</comment>
<comment type="subunit">
    <text evidence="1">The 4 large subunits of the cytochrome b6-f complex are cytochrome b6, subunit IV (17 kDa polypeptide, PetD), cytochrome f and the Rieske protein, while the 4 small subunits are PetG, PetL, PetM and PetN. The complex functions as a dimer.</text>
</comment>
<comment type="subcellular location">
    <subcellularLocation>
        <location evidence="1">Plastid</location>
        <location evidence="1">Chloroplast thylakoid membrane</location>
        <topology evidence="1">Single-pass membrane protein</topology>
    </subcellularLocation>
</comment>
<comment type="similarity">
    <text evidence="1">Belongs to the PetL family.</text>
</comment>
<accession>P69402</accession>
<accession>P12181</accession>
<geneLocation type="chloroplast"/>
<evidence type="ECO:0000255" key="1">
    <source>
        <dbReference type="HAMAP-Rule" id="MF_00433"/>
    </source>
</evidence>
<gene>
    <name evidence="1" type="primary">petL</name>
</gene>
<proteinExistence type="inferred from homology"/>
<keyword id="KW-0150">Chloroplast</keyword>
<keyword id="KW-0249">Electron transport</keyword>
<keyword id="KW-0472">Membrane</keyword>
<keyword id="KW-0602">Photosynthesis</keyword>
<keyword id="KW-0934">Plastid</keyword>
<keyword id="KW-0793">Thylakoid</keyword>
<keyword id="KW-0812">Transmembrane</keyword>
<keyword id="KW-1133">Transmembrane helix</keyword>
<keyword id="KW-0813">Transport</keyword>
<dbReference type="EMBL" id="AJ316582">
    <property type="protein sequence ID" value="CAC88062.1"/>
    <property type="molecule type" value="Genomic_DNA"/>
</dbReference>
<dbReference type="RefSeq" id="NP_783250.1">
    <property type="nucleotide sequence ID" value="NC_004561.1"/>
</dbReference>
<dbReference type="SMR" id="P69402"/>
<dbReference type="GeneID" id="806480"/>
<dbReference type="GO" id="GO:0009535">
    <property type="term" value="C:chloroplast thylakoid membrane"/>
    <property type="evidence" value="ECO:0007669"/>
    <property type="project" value="UniProtKB-SubCell"/>
</dbReference>
<dbReference type="GO" id="GO:0009512">
    <property type="term" value="C:cytochrome b6f complex"/>
    <property type="evidence" value="ECO:0007669"/>
    <property type="project" value="InterPro"/>
</dbReference>
<dbReference type="GO" id="GO:0045158">
    <property type="term" value="F:electron transporter, transferring electrons within cytochrome b6/f complex of photosystem II activity"/>
    <property type="evidence" value="ECO:0007669"/>
    <property type="project" value="UniProtKB-UniRule"/>
</dbReference>
<dbReference type="GO" id="GO:0015979">
    <property type="term" value="P:photosynthesis"/>
    <property type="evidence" value="ECO:0007669"/>
    <property type="project" value="UniProtKB-KW"/>
</dbReference>
<dbReference type="HAMAP" id="MF_00433">
    <property type="entry name" value="Cytb6_f_PetL"/>
    <property type="match status" value="1"/>
</dbReference>
<dbReference type="InterPro" id="IPR007802">
    <property type="entry name" value="Cyt_b6/f_cplx_su6"/>
</dbReference>
<dbReference type="PANTHER" id="PTHR37266">
    <property type="entry name" value="CYTOCHROME B6-F COMPLEX SUBUNIT 6"/>
    <property type="match status" value="1"/>
</dbReference>
<dbReference type="PANTHER" id="PTHR37266:SF1">
    <property type="entry name" value="CYTOCHROME B6-F COMPLEX SUBUNIT 6"/>
    <property type="match status" value="1"/>
</dbReference>
<dbReference type="Pfam" id="PF05115">
    <property type="entry name" value="PetL"/>
    <property type="match status" value="1"/>
</dbReference>
<dbReference type="SUPFAM" id="SSF103436">
    <property type="entry name" value="PetL subunit of the cytochrome b6f complex"/>
    <property type="match status" value="1"/>
</dbReference>
<reference key="1">
    <citation type="journal article" date="2002" name="Mol. Biol. Evol.">
        <title>The plastid chromosome of Atropa belladonna and its comparison with that of Nicotiana tabacum: the role of RNA editing in generating divergence in the process of plant speciation.</title>
        <authorList>
            <person name="Schmitz-Linneweber C."/>
            <person name="Regel R."/>
            <person name="Du T.G."/>
            <person name="Hupfer H."/>
            <person name="Herrmann R.G."/>
            <person name="Maier R.M."/>
        </authorList>
    </citation>
    <scope>NUCLEOTIDE SEQUENCE [LARGE SCALE GENOMIC DNA]</scope>
    <source>
        <strain>cv. Ab5p(kan)</strain>
    </source>
</reference>
<organism>
    <name type="scientific">Atropa belladonna</name>
    <name type="common">Belladonna</name>
    <name type="synonym">Deadly nightshade</name>
    <dbReference type="NCBI Taxonomy" id="33113"/>
    <lineage>
        <taxon>Eukaryota</taxon>
        <taxon>Viridiplantae</taxon>
        <taxon>Streptophyta</taxon>
        <taxon>Embryophyta</taxon>
        <taxon>Tracheophyta</taxon>
        <taxon>Spermatophyta</taxon>
        <taxon>Magnoliopsida</taxon>
        <taxon>eudicotyledons</taxon>
        <taxon>Gunneridae</taxon>
        <taxon>Pentapetalae</taxon>
        <taxon>asterids</taxon>
        <taxon>lamiids</taxon>
        <taxon>Solanales</taxon>
        <taxon>Solanaceae</taxon>
        <taxon>Solanoideae</taxon>
        <taxon>Hyoscyameae</taxon>
        <taxon>Atropa</taxon>
    </lineage>
</organism>